<name>TRMN6_HAEI8</name>
<comment type="function">
    <text evidence="1">Specifically methylates the adenine in position 37 of tRNA(1)(Val) (anticodon cmo5UAC).</text>
</comment>
<comment type="catalytic activity">
    <reaction evidence="1">
        <text>adenosine(37) in tRNA1(Val) + S-adenosyl-L-methionine = N(6)-methyladenosine(37) in tRNA1(Val) + S-adenosyl-L-homocysteine + H(+)</text>
        <dbReference type="Rhea" id="RHEA:43160"/>
        <dbReference type="Rhea" id="RHEA-COMP:10369"/>
        <dbReference type="Rhea" id="RHEA-COMP:10370"/>
        <dbReference type="ChEBI" id="CHEBI:15378"/>
        <dbReference type="ChEBI" id="CHEBI:57856"/>
        <dbReference type="ChEBI" id="CHEBI:59789"/>
        <dbReference type="ChEBI" id="CHEBI:74411"/>
        <dbReference type="ChEBI" id="CHEBI:74449"/>
        <dbReference type="EC" id="2.1.1.223"/>
    </reaction>
</comment>
<comment type="subcellular location">
    <subcellularLocation>
        <location evidence="1">Cytoplasm</location>
    </subcellularLocation>
</comment>
<comment type="similarity">
    <text evidence="1">Belongs to the methyltransferase superfamily. tRNA (adenine-N(6)-)-methyltransferase family.</text>
</comment>
<comment type="sequence caution" evidence="2">
    <conflict type="erroneous initiation">
        <sequence resource="EMBL-CDS" id="AAX87476"/>
    </conflict>
</comment>
<feature type="chain" id="PRO_0000387383" description="tRNA1(Val) (adenine(37)-N6)-methyltransferase">
    <location>
        <begin position="1"/>
        <end position="232"/>
    </location>
</feature>
<organism>
    <name type="scientific">Haemophilus influenzae (strain 86-028NP)</name>
    <dbReference type="NCBI Taxonomy" id="281310"/>
    <lineage>
        <taxon>Bacteria</taxon>
        <taxon>Pseudomonadati</taxon>
        <taxon>Pseudomonadota</taxon>
        <taxon>Gammaproteobacteria</taxon>
        <taxon>Pasteurellales</taxon>
        <taxon>Pasteurellaceae</taxon>
        <taxon>Haemophilus</taxon>
    </lineage>
</organism>
<keyword id="KW-0963">Cytoplasm</keyword>
<keyword id="KW-0489">Methyltransferase</keyword>
<keyword id="KW-0949">S-adenosyl-L-methionine</keyword>
<keyword id="KW-0808">Transferase</keyword>
<keyword id="KW-0819">tRNA processing</keyword>
<proteinExistence type="inferred from homology"/>
<dbReference type="EC" id="2.1.1.223" evidence="1"/>
<dbReference type="EMBL" id="CP000057">
    <property type="protein sequence ID" value="AAX87476.1"/>
    <property type="status" value="ALT_INIT"/>
    <property type="molecule type" value="Genomic_DNA"/>
</dbReference>
<dbReference type="RefSeq" id="WP_005656441.1">
    <property type="nucleotide sequence ID" value="NC_007146.2"/>
</dbReference>
<dbReference type="SMR" id="Q4QNC1"/>
<dbReference type="KEGG" id="hit:NTHI0547"/>
<dbReference type="HOGENOM" id="CLU_061983_0_0_6"/>
<dbReference type="Proteomes" id="UP000002525">
    <property type="component" value="Chromosome"/>
</dbReference>
<dbReference type="GO" id="GO:0005737">
    <property type="term" value="C:cytoplasm"/>
    <property type="evidence" value="ECO:0007669"/>
    <property type="project" value="UniProtKB-SubCell"/>
</dbReference>
<dbReference type="GO" id="GO:0003676">
    <property type="term" value="F:nucleic acid binding"/>
    <property type="evidence" value="ECO:0007669"/>
    <property type="project" value="InterPro"/>
</dbReference>
<dbReference type="GO" id="GO:0000179">
    <property type="term" value="F:rRNA (adenine-N6,N6-)-dimethyltransferase activity"/>
    <property type="evidence" value="ECO:0007669"/>
    <property type="project" value="InterPro"/>
</dbReference>
<dbReference type="GO" id="GO:0016430">
    <property type="term" value="F:tRNA (adenine-N6)-methyltransferase activity"/>
    <property type="evidence" value="ECO:0007669"/>
    <property type="project" value="UniProtKB-UniRule"/>
</dbReference>
<dbReference type="GO" id="GO:0008033">
    <property type="term" value="P:tRNA processing"/>
    <property type="evidence" value="ECO:0007669"/>
    <property type="project" value="UniProtKB-UniRule"/>
</dbReference>
<dbReference type="CDD" id="cd02440">
    <property type="entry name" value="AdoMet_MTases"/>
    <property type="match status" value="1"/>
</dbReference>
<dbReference type="Gene3D" id="3.40.50.150">
    <property type="entry name" value="Vaccinia Virus protein VP39"/>
    <property type="match status" value="1"/>
</dbReference>
<dbReference type="HAMAP" id="MF_01872">
    <property type="entry name" value="tRNA_methyltr_YfiC"/>
    <property type="match status" value="1"/>
</dbReference>
<dbReference type="InterPro" id="IPR002052">
    <property type="entry name" value="DNA_methylase_N6_adenine_CS"/>
</dbReference>
<dbReference type="InterPro" id="IPR020596">
    <property type="entry name" value="rRNA_Ade_Mease_Trfase_CS"/>
</dbReference>
<dbReference type="InterPro" id="IPR029063">
    <property type="entry name" value="SAM-dependent_MTases_sf"/>
</dbReference>
<dbReference type="InterPro" id="IPR007848">
    <property type="entry name" value="Small_mtfrase_dom"/>
</dbReference>
<dbReference type="InterPro" id="IPR050210">
    <property type="entry name" value="tRNA_Adenine-N(6)_MTase"/>
</dbReference>
<dbReference type="InterPro" id="IPR022882">
    <property type="entry name" value="tRNA_adenine-N6_MeTrfase"/>
</dbReference>
<dbReference type="PANTHER" id="PTHR47739">
    <property type="entry name" value="TRNA1(VAL) (ADENINE(37)-N6)-METHYLTRANSFERASE"/>
    <property type="match status" value="1"/>
</dbReference>
<dbReference type="PANTHER" id="PTHR47739:SF1">
    <property type="entry name" value="TRNA1(VAL) (ADENINE(37)-N6)-METHYLTRANSFERASE"/>
    <property type="match status" value="1"/>
</dbReference>
<dbReference type="Pfam" id="PF05175">
    <property type="entry name" value="MTS"/>
    <property type="match status" value="1"/>
</dbReference>
<dbReference type="PRINTS" id="PR00507">
    <property type="entry name" value="N12N6MTFRASE"/>
</dbReference>
<dbReference type="SUPFAM" id="SSF53335">
    <property type="entry name" value="S-adenosyl-L-methionine-dependent methyltransferases"/>
    <property type="match status" value="1"/>
</dbReference>
<dbReference type="PROSITE" id="PS00092">
    <property type="entry name" value="N6_MTASE"/>
    <property type="match status" value="1"/>
</dbReference>
<sequence>MSGFTFKQFHINQDSCAMKVGTDGILLGAWADVKHCKNILDMGSGTGLLTLMLAQRTEENCQIQAVELDPIAAKQAQENINNSVWKNRIQLTQADIQHFLQTTEQTFDLIVANPPYFEQGIACKNEERELARYTKQSHLNWLEWAATRLSENGKISFVLPYDAGKTLTKSTALFCIKQTNVITKIGKTPQRMLLTFAKQPEVLMQDQLVIYDADNQYTEAFIELTKDFYLKF</sequence>
<protein>
    <recommendedName>
        <fullName evidence="1">tRNA1(Val) (adenine(37)-N6)-methyltransferase</fullName>
        <ecNumber evidence="1">2.1.1.223</ecNumber>
    </recommendedName>
    <alternativeName>
        <fullName evidence="1">tRNA m6A37 methyltransferase</fullName>
    </alternativeName>
</protein>
<reference key="1">
    <citation type="journal article" date="2005" name="J. Bacteriol.">
        <title>Genomic sequence of an otitis media isolate of nontypeable Haemophilus influenzae: comparative study with H. influenzae serotype d, strain KW20.</title>
        <authorList>
            <person name="Harrison A."/>
            <person name="Dyer D.W."/>
            <person name="Gillaspy A."/>
            <person name="Ray W.C."/>
            <person name="Mungur R."/>
            <person name="Carson M.B."/>
            <person name="Zhong H."/>
            <person name="Gipson J."/>
            <person name="Gipson M."/>
            <person name="Johnson L.S."/>
            <person name="Lewis L."/>
            <person name="Bakaletz L.O."/>
            <person name="Munson R.S. Jr."/>
        </authorList>
    </citation>
    <scope>NUCLEOTIDE SEQUENCE [LARGE SCALE GENOMIC DNA]</scope>
    <source>
        <strain>86-028NP</strain>
    </source>
</reference>
<accession>Q4QNC1</accession>
<evidence type="ECO:0000255" key="1">
    <source>
        <dbReference type="HAMAP-Rule" id="MF_01872"/>
    </source>
</evidence>
<evidence type="ECO:0000305" key="2"/>
<gene>
    <name type="ordered locus">NTHI0547</name>
</gene>